<reference key="1">
    <citation type="submission" date="2005-11" db="EMBL/GenBank/DDBJ databases">
        <title>The complete genome sequence of Lawsonia intracellularis: the causative agent of proliferative enteropathy.</title>
        <authorList>
            <person name="Kaur K."/>
            <person name="Zhang Q."/>
            <person name="Beckler D."/>
            <person name="Munir S."/>
            <person name="Li L."/>
            <person name="Kinsley K."/>
            <person name="Herron L."/>
            <person name="Peterson A."/>
            <person name="May B."/>
            <person name="Singh S."/>
            <person name="Gebhart C."/>
            <person name="Kapur V."/>
        </authorList>
    </citation>
    <scope>NUCLEOTIDE SEQUENCE [LARGE SCALE GENOMIC DNA]</scope>
    <source>
        <strain>PHE/MN1-00</strain>
    </source>
</reference>
<accession>Q1MPP4</accession>
<name>RS13_LAWIP</name>
<evidence type="ECO:0000255" key="1">
    <source>
        <dbReference type="HAMAP-Rule" id="MF_01315"/>
    </source>
</evidence>
<evidence type="ECO:0000256" key="2">
    <source>
        <dbReference type="SAM" id="MobiDB-lite"/>
    </source>
</evidence>
<evidence type="ECO:0000305" key="3"/>
<feature type="chain" id="PRO_0000306633" description="Small ribosomal subunit protein uS13">
    <location>
        <begin position="1"/>
        <end position="122"/>
    </location>
</feature>
<feature type="region of interest" description="Disordered" evidence="2">
    <location>
        <begin position="95"/>
        <end position="122"/>
    </location>
</feature>
<organism>
    <name type="scientific">Lawsonia intracellularis (strain PHE/MN1-00)</name>
    <dbReference type="NCBI Taxonomy" id="363253"/>
    <lineage>
        <taxon>Bacteria</taxon>
        <taxon>Pseudomonadati</taxon>
        <taxon>Thermodesulfobacteriota</taxon>
        <taxon>Desulfovibrionia</taxon>
        <taxon>Desulfovibrionales</taxon>
        <taxon>Desulfovibrionaceae</taxon>
        <taxon>Lawsonia</taxon>
    </lineage>
</organism>
<protein>
    <recommendedName>
        <fullName evidence="1">Small ribosomal subunit protein uS13</fullName>
    </recommendedName>
    <alternativeName>
        <fullName evidence="3">30S ribosomal protein S13</fullName>
    </alternativeName>
</protein>
<comment type="function">
    <text evidence="1">Located at the top of the head of the 30S subunit, it contacts several helices of the 16S rRNA. In the 70S ribosome it contacts the 23S rRNA (bridge B1a) and protein L5 of the 50S subunit (bridge B1b), connecting the 2 subunits; these bridges are implicated in subunit movement. Contacts the tRNAs in the A and P-sites.</text>
</comment>
<comment type="subunit">
    <text evidence="1">Part of the 30S ribosomal subunit. Forms a loose heterodimer with protein S19. Forms two bridges to the 50S subunit in the 70S ribosome.</text>
</comment>
<comment type="similarity">
    <text evidence="1">Belongs to the universal ribosomal protein uS13 family.</text>
</comment>
<gene>
    <name evidence="1" type="primary">rpsM</name>
    <name type="ordered locus">LI0979</name>
</gene>
<proteinExistence type="inferred from homology"/>
<dbReference type="EMBL" id="AM180252">
    <property type="protein sequence ID" value="CAJ55033.1"/>
    <property type="molecule type" value="Genomic_DNA"/>
</dbReference>
<dbReference type="RefSeq" id="WP_011527062.1">
    <property type="nucleotide sequence ID" value="NC_008011.1"/>
</dbReference>
<dbReference type="SMR" id="Q1MPP4"/>
<dbReference type="STRING" id="363253.LI0979"/>
<dbReference type="KEGG" id="lip:LI0979"/>
<dbReference type="eggNOG" id="COG0099">
    <property type="taxonomic scope" value="Bacteria"/>
</dbReference>
<dbReference type="HOGENOM" id="CLU_103849_1_2_7"/>
<dbReference type="OrthoDB" id="9803610at2"/>
<dbReference type="Proteomes" id="UP000002430">
    <property type="component" value="Chromosome"/>
</dbReference>
<dbReference type="GO" id="GO:0005829">
    <property type="term" value="C:cytosol"/>
    <property type="evidence" value="ECO:0007669"/>
    <property type="project" value="TreeGrafter"/>
</dbReference>
<dbReference type="GO" id="GO:0015935">
    <property type="term" value="C:small ribosomal subunit"/>
    <property type="evidence" value="ECO:0007669"/>
    <property type="project" value="TreeGrafter"/>
</dbReference>
<dbReference type="GO" id="GO:0019843">
    <property type="term" value="F:rRNA binding"/>
    <property type="evidence" value="ECO:0007669"/>
    <property type="project" value="UniProtKB-UniRule"/>
</dbReference>
<dbReference type="GO" id="GO:0003735">
    <property type="term" value="F:structural constituent of ribosome"/>
    <property type="evidence" value="ECO:0007669"/>
    <property type="project" value="InterPro"/>
</dbReference>
<dbReference type="GO" id="GO:0000049">
    <property type="term" value="F:tRNA binding"/>
    <property type="evidence" value="ECO:0007669"/>
    <property type="project" value="UniProtKB-UniRule"/>
</dbReference>
<dbReference type="GO" id="GO:0006412">
    <property type="term" value="P:translation"/>
    <property type="evidence" value="ECO:0007669"/>
    <property type="project" value="UniProtKB-UniRule"/>
</dbReference>
<dbReference type="FunFam" id="1.10.8.50:FF:000001">
    <property type="entry name" value="30S ribosomal protein S13"/>
    <property type="match status" value="1"/>
</dbReference>
<dbReference type="FunFam" id="4.10.910.10:FF:000001">
    <property type="entry name" value="30S ribosomal protein S13"/>
    <property type="match status" value="1"/>
</dbReference>
<dbReference type="Gene3D" id="1.10.8.50">
    <property type="match status" value="1"/>
</dbReference>
<dbReference type="Gene3D" id="4.10.910.10">
    <property type="entry name" value="30s ribosomal protein s13, domain 2"/>
    <property type="match status" value="1"/>
</dbReference>
<dbReference type="HAMAP" id="MF_01315">
    <property type="entry name" value="Ribosomal_uS13"/>
    <property type="match status" value="1"/>
</dbReference>
<dbReference type="InterPro" id="IPR027437">
    <property type="entry name" value="Rbsml_uS13_C"/>
</dbReference>
<dbReference type="InterPro" id="IPR001892">
    <property type="entry name" value="Ribosomal_uS13"/>
</dbReference>
<dbReference type="InterPro" id="IPR010979">
    <property type="entry name" value="Ribosomal_uS13-like_H2TH"/>
</dbReference>
<dbReference type="InterPro" id="IPR019980">
    <property type="entry name" value="Ribosomal_uS13_bac-type"/>
</dbReference>
<dbReference type="InterPro" id="IPR018269">
    <property type="entry name" value="Ribosomal_uS13_CS"/>
</dbReference>
<dbReference type="NCBIfam" id="TIGR03631">
    <property type="entry name" value="uS13_bact"/>
    <property type="match status" value="1"/>
</dbReference>
<dbReference type="PANTHER" id="PTHR10871">
    <property type="entry name" value="30S RIBOSOMAL PROTEIN S13/40S RIBOSOMAL PROTEIN S18"/>
    <property type="match status" value="1"/>
</dbReference>
<dbReference type="PANTHER" id="PTHR10871:SF1">
    <property type="entry name" value="SMALL RIBOSOMAL SUBUNIT PROTEIN US13M"/>
    <property type="match status" value="1"/>
</dbReference>
<dbReference type="Pfam" id="PF00416">
    <property type="entry name" value="Ribosomal_S13"/>
    <property type="match status" value="1"/>
</dbReference>
<dbReference type="PIRSF" id="PIRSF002134">
    <property type="entry name" value="Ribosomal_S13"/>
    <property type="match status" value="1"/>
</dbReference>
<dbReference type="SUPFAM" id="SSF46946">
    <property type="entry name" value="S13-like H2TH domain"/>
    <property type="match status" value="1"/>
</dbReference>
<dbReference type="PROSITE" id="PS00646">
    <property type="entry name" value="RIBOSOMAL_S13_1"/>
    <property type="match status" value="1"/>
</dbReference>
<dbReference type="PROSITE" id="PS50159">
    <property type="entry name" value="RIBOSOMAL_S13_2"/>
    <property type="match status" value="1"/>
</dbReference>
<keyword id="KW-1185">Reference proteome</keyword>
<keyword id="KW-0687">Ribonucleoprotein</keyword>
<keyword id="KW-0689">Ribosomal protein</keyword>
<keyword id="KW-0694">RNA-binding</keyword>
<keyword id="KW-0699">rRNA-binding</keyword>
<keyword id="KW-0820">tRNA-binding</keyword>
<sequence>MARIAGIDLPRGKRSDIALSYIYGVGRVTALKVLDAVGINWSRSIDDLSAEELNEVRKELEKNYKVEGELRREVSANIKRLMDIGCYRGLRHRKGLPVHGQRTHTNARTRKGPRKGAVGKKK</sequence>